<accession>B7GGV3</accession>
<dbReference type="EMBL" id="CP000922">
    <property type="protein sequence ID" value="ACJ32908.1"/>
    <property type="molecule type" value="Genomic_DNA"/>
</dbReference>
<dbReference type="RefSeq" id="WP_003397837.1">
    <property type="nucleotide sequence ID" value="NC_011567.1"/>
</dbReference>
<dbReference type="SMR" id="B7GGV3"/>
<dbReference type="STRING" id="491915.Aflv_0524"/>
<dbReference type="GeneID" id="7036781"/>
<dbReference type="KEGG" id="afl:Aflv_0524"/>
<dbReference type="eggNOG" id="COG0292">
    <property type="taxonomic scope" value="Bacteria"/>
</dbReference>
<dbReference type="HOGENOM" id="CLU_123265_0_1_9"/>
<dbReference type="Proteomes" id="UP000000742">
    <property type="component" value="Chromosome"/>
</dbReference>
<dbReference type="GO" id="GO:1990904">
    <property type="term" value="C:ribonucleoprotein complex"/>
    <property type="evidence" value="ECO:0007669"/>
    <property type="project" value="UniProtKB-KW"/>
</dbReference>
<dbReference type="GO" id="GO:0005840">
    <property type="term" value="C:ribosome"/>
    <property type="evidence" value="ECO:0007669"/>
    <property type="project" value="UniProtKB-KW"/>
</dbReference>
<dbReference type="GO" id="GO:0019843">
    <property type="term" value="F:rRNA binding"/>
    <property type="evidence" value="ECO:0007669"/>
    <property type="project" value="UniProtKB-UniRule"/>
</dbReference>
<dbReference type="GO" id="GO:0003735">
    <property type="term" value="F:structural constituent of ribosome"/>
    <property type="evidence" value="ECO:0007669"/>
    <property type="project" value="InterPro"/>
</dbReference>
<dbReference type="GO" id="GO:0000027">
    <property type="term" value="P:ribosomal large subunit assembly"/>
    <property type="evidence" value="ECO:0007669"/>
    <property type="project" value="UniProtKB-UniRule"/>
</dbReference>
<dbReference type="GO" id="GO:0006412">
    <property type="term" value="P:translation"/>
    <property type="evidence" value="ECO:0007669"/>
    <property type="project" value="InterPro"/>
</dbReference>
<dbReference type="CDD" id="cd07026">
    <property type="entry name" value="Ribosomal_L20"/>
    <property type="match status" value="1"/>
</dbReference>
<dbReference type="FunFam" id="1.10.1900.20:FF:000001">
    <property type="entry name" value="50S ribosomal protein L20"/>
    <property type="match status" value="1"/>
</dbReference>
<dbReference type="Gene3D" id="6.10.160.10">
    <property type="match status" value="1"/>
</dbReference>
<dbReference type="Gene3D" id="1.10.1900.20">
    <property type="entry name" value="Ribosomal protein L20"/>
    <property type="match status" value="1"/>
</dbReference>
<dbReference type="HAMAP" id="MF_00382">
    <property type="entry name" value="Ribosomal_bL20"/>
    <property type="match status" value="1"/>
</dbReference>
<dbReference type="InterPro" id="IPR005813">
    <property type="entry name" value="Ribosomal_bL20"/>
</dbReference>
<dbReference type="InterPro" id="IPR049946">
    <property type="entry name" value="RIBOSOMAL_L20_CS"/>
</dbReference>
<dbReference type="InterPro" id="IPR035566">
    <property type="entry name" value="Ribosomal_protein_bL20_C"/>
</dbReference>
<dbReference type="NCBIfam" id="TIGR01032">
    <property type="entry name" value="rplT_bact"/>
    <property type="match status" value="1"/>
</dbReference>
<dbReference type="PANTHER" id="PTHR10986">
    <property type="entry name" value="39S RIBOSOMAL PROTEIN L20"/>
    <property type="match status" value="1"/>
</dbReference>
<dbReference type="Pfam" id="PF00453">
    <property type="entry name" value="Ribosomal_L20"/>
    <property type="match status" value="1"/>
</dbReference>
<dbReference type="PRINTS" id="PR00062">
    <property type="entry name" value="RIBOSOMALL20"/>
</dbReference>
<dbReference type="SUPFAM" id="SSF74731">
    <property type="entry name" value="Ribosomal protein L20"/>
    <property type="match status" value="1"/>
</dbReference>
<dbReference type="PROSITE" id="PS00937">
    <property type="entry name" value="RIBOSOMAL_L20"/>
    <property type="match status" value="1"/>
</dbReference>
<organism>
    <name type="scientific">Anoxybacillus flavithermus (strain DSM 21510 / WK1)</name>
    <dbReference type="NCBI Taxonomy" id="491915"/>
    <lineage>
        <taxon>Bacteria</taxon>
        <taxon>Bacillati</taxon>
        <taxon>Bacillota</taxon>
        <taxon>Bacilli</taxon>
        <taxon>Bacillales</taxon>
        <taxon>Anoxybacillaceae</taxon>
        <taxon>Anoxybacillus</taxon>
    </lineage>
</organism>
<sequence length="119" mass="13836">MPRVKGGTVTRRRRKKILKLAKGYFGSKHRLYKVANQQVMKSLMYAYRDRRQRKRDFRKLWITRINAAARMNGLSYSRLMHGLKLAGIEVNRKMLADLAVNDAAAFTQLANIAKENLNK</sequence>
<name>RL20_ANOFW</name>
<keyword id="KW-0687">Ribonucleoprotein</keyword>
<keyword id="KW-0689">Ribosomal protein</keyword>
<keyword id="KW-0694">RNA-binding</keyword>
<keyword id="KW-0699">rRNA-binding</keyword>
<reference key="1">
    <citation type="journal article" date="2008" name="Genome Biol.">
        <title>Encapsulated in silica: genome, proteome and physiology of the thermophilic bacterium Anoxybacillus flavithermus WK1.</title>
        <authorList>
            <person name="Saw J.H."/>
            <person name="Mountain B.W."/>
            <person name="Feng L."/>
            <person name="Omelchenko M.V."/>
            <person name="Hou S."/>
            <person name="Saito J.A."/>
            <person name="Stott M.B."/>
            <person name="Li D."/>
            <person name="Zhao G."/>
            <person name="Wu J."/>
            <person name="Galperin M.Y."/>
            <person name="Koonin E.V."/>
            <person name="Makarova K.S."/>
            <person name="Wolf Y.I."/>
            <person name="Rigden D.J."/>
            <person name="Dunfield P.F."/>
            <person name="Wang L."/>
            <person name="Alam M."/>
        </authorList>
    </citation>
    <scope>NUCLEOTIDE SEQUENCE [LARGE SCALE GENOMIC DNA]</scope>
    <source>
        <strain>DSM 21510 / WK1</strain>
    </source>
</reference>
<feature type="chain" id="PRO_1000122269" description="Large ribosomal subunit protein bL20">
    <location>
        <begin position="1"/>
        <end position="119"/>
    </location>
</feature>
<proteinExistence type="inferred from homology"/>
<protein>
    <recommendedName>
        <fullName evidence="1">Large ribosomal subunit protein bL20</fullName>
    </recommendedName>
    <alternativeName>
        <fullName evidence="2">50S ribosomal protein L20</fullName>
    </alternativeName>
</protein>
<gene>
    <name evidence="1" type="primary">rplT</name>
    <name type="ordered locus">Aflv_0524</name>
</gene>
<evidence type="ECO:0000255" key="1">
    <source>
        <dbReference type="HAMAP-Rule" id="MF_00382"/>
    </source>
</evidence>
<evidence type="ECO:0000305" key="2"/>
<comment type="function">
    <text evidence="1">Binds directly to 23S ribosomal RNA and is necessary for the in vitro assembly process of the 50S ribosomal subunit. It is not involved in the protein synthesizing functions of that subunit.</text>
</comment>
<comment type="similarity">
    <text evidence="1">Belongs to the bacterial ribosomal protein bL20 family.</text>
</comment>